<comment type="function">
    <text evidence="4 5">Plays a pivotal role in the control of morphogenesis of shoot organs by negatively regulating the expression of boundary-specific genes such as CUC genes, probably through the induction of miRNA (e.g. miR164). Participates in ovule development (PubMed:25378179).</text>
</comment>
<comment type="subunit">
    <text evidence="3 5 6">Interacts with AHP1, AHP2 and AHP3 (PubMed:11158442). Interacts with SPL (PubMed:25378179, PubMed:25527103).</text>
</comment>
<comment type="interaction">
    <interactant intactId="EBI-3133327">
        <id>O82277</id>
    </interactant>
    <interactant intactId="EBI-15192249">
        <id>C0SUZ3</id>
        <label>At1g35490</label>
    </interactant>
    <organismsDiffer>false</organismsDiffer>
    <experiments>3</experiments>
</comment>
<comment type="interaction">
    <interactant intactId="EBI-3133327">
        <id>O82277</id>
    </interactant>
    <interactant intactId="EBI-15199129">
        <id>Q8GWP4</id>
        <label>At2g21530</label>
    </interactant>
    <organismsDiffer>false</organismsDiffer>
    <experiments>4</experiments>
</comment>
<comment type="interaction">
    <interactant intactId="EBI-3133327">
        <id>O82277</id>
    </interactant>
    <interactant intactId="EBI-15195245">
        <id>Q9ZW36</id>
        <label>At2g29580</label>
    </interactant>
    <organismsDiffer>false</organismsDiffer>
    <experiments>3</experiments>
</comment>
<comment type="interaction">
    <interactant intactId="EBI-3133327">
        <id>O82277</id>
    </interactant>
    <interactant intactId="EBI-15191587">
        <id>F4K1A8</id>
        <label>At5g26749</label>
    </interactant>
    <organismsDiffer>false</organismsDiffer>
    <experiments>3</experiments>
</comment>
<comment type="interaction">
    <interactant intactId="EBI-3133327">
        <id>O82277</id>
    </interactant>
    <interactant intactId="EBI-1536772">
        <id>O04292</id>
        <label>ATHB-9</label>
    </interactant>
    <organismsDiffer>false</organismsDiffer>
    <experiments>3</experiments>
</comment>
<comment type="interaction">
    <interactant intactId="EBI-3133327">
        <id>O82277</id>
    </interactant>
    <interactant intactId="EBI-4475455">
        <id>Q9FG01</id>
        <label>ATO</label>
    </interactant>
    <organismsDiffer>false</organismsDiffer>
    <experiments>3</experiments>
</comment>
<comment type="interaction">
    <interactant intactId="EBI-3133327">
        <id>O82277</id>
    </interactant>
    <interactant intactId="EBI-15192637">
        <id>Q9C7T4</id>
        <label>BHLH96</label>
    </interactant>
    <organismsDiffer>false</organismsDiffer>
    <experiments>4</experiments>
</comment>
<comment type="interaction">
    <interactant intactId="EBI-3133327">
        <id>O82277</id>
    </interactant>
    <interactant intactId="EBI-943044">
        <id>Q8RU59</id>
        <label>BZIP48</label>
    </interactant>
    <organismsDiffer>false</organismsDiffer>
    <experiments>3</experiments>
</comment>
<comment type="interaction">
    <interactant intactId="EBI-3133327">
        <id>O82277</id>
    </interactant>
    <interactant intactId="EBI-966009">
        <id>O80340</id>
        <label>ERF4</label>
    </interactant>
    <organismsDiffer>false</organismsDiffer>
    <experiments>3</experiments>
</comment>
<comment type="interaction">
    <interactant intactId="EBI-3133327">
        <id>O82277</id>
    </interactant>
    <interactant intactId="EBI-1396623">
        <id>Q8L8A5</id>
        <label>GIF1</label>
    </interactant>
    <organismsDiffer>false</organismsDiffer>
    <experiments>3</experiments>
</comment>
<comment type="interaction">
    <interactant intactId="EBI-3133327">
        <id>O82277</id>
    </interactant>
    <interactant intactId="EBI-15194063">
        <id>Q9C9H1</id>
        <label>GIS3</label>
    </interactant>
    <organismsDiffer>false</organismsDiffer>
    <experiments>3</experiments>
</comment>
<comment type="interaction">
    <interactant intactId="EBI-3133327">
        <id>O82277</id>
    </interactant>
    <interactant intactId="EBI-1536734">
        <id>Q9LXD8</id>
        <label>HEC3</label>
    </interactant>
    <organismsDiffer>false</organismsDiffer>
    <experiments>3</experiments>
</comment>
<comment type="interaction">
    <interactant intactId="EBI-3133327">
        <id>O82277</id>
    </interactant>
    <interactant intactId="EBI-15192423">
        <id>F4JRB0-2</id>
        <label>HHO5</label>
    </interactant>
    <organismsDiffer>false</organismsDiffer>
    <experiments>3</experiments>
</comment>
<comment type="interaction">
    <interactant intactId="EBI-3133327">
        <id>O82277</id>
    </interactant>
    <interactant intactId="EBI-1998502">
        <id>O04017</id>
        <label>NAC098</label>
    </interactant>
    <organismsDiffer>false</organismsDiffer>
    <experiments>3</experiments>
</comment>
<comment type="interaction">
    <interactant intactId="EBI-3133327">
        <id>O82277</id>
    </interactant>
    <interactant intactId="EBI-15191571">
        <id>Q4PSE2</id>
        <label>NFYC8</label>
    </interactant>
    <organismsDiffer>false</organismsDiffer>
    <experiments>3</experiments>
</comment>
<comment type="interaction">
    <interactant intactId="EBI-3133327">
        <id>O82277</id>
    </interactant>
    <interactant intactId="EBI-15193025">
        <id>Q9LXU1</id>
        <label>NOT9B</label>
    </interactant>
    <organismsDiffer>false</organismsDiffer>
    <experiments>3</experiments>
</comment>
<comment type="interaction">
    <interactant intactId="EBI-3133327">
        <id>O82277</id>
    </interactant>
    <interactant intactId="EBI-2363192">
        <id>Q8S8E3</id>
        <label>PYL6</label>
    </interactant>
    <organismsDiffer>false</organismsDiffer>
    <experiments>3</experiments>
</comment>
<comment type="interaction">
    <interactant intactId="EBI-3133327">
        <id>O82277</id>
    </interactant>
    <interactant intactId="EBI-2349513">
        <id>Q84MC7</id>
        <label>PYL9</label>
    </interactant>
    <organismsDiffer>false</organismsDiffer>
    <experiments>3</experiments>
</comment>
<comment type="interaction">
    <interactant intactId="EBI-3133327">
        <id>O82277</id>
    </interactant>
    <interactant intactId="EBI-4428552">
        <id>Q94JW8</id>
        <label>SPL6</label>
    </interactant>
    <organismsDiffer>false</organismsDiffer>
    <experiments>3</experiments>
</comment>
<comment type="interaction">
    <interactant intactId="EBI-3133327">
        <id>O82277</id>
    </interactant>
    <interactant intactId="EBI-15192995">
        <id>O65517</id>
        <label>SRS2</label>
    </interactant>
    <organismsDiffer>false</organismsDiffer>
    <experiments>3</experiments>
</comment>
<comment type="interaction">
    <interactant intactId="EBI-3133327">
        <id>O82277</id>
    </interactant>
    <interactant intactId="EBI-541400">
        <id>Q93ZE2</id>
        <label>TGA7</label>
    </interactant>
    <organismsDiffer>false</organismsDiffer>
    <experiments>4</experiments>
</comment>
<comment type="interaction">
    <interactant intactId="EBI-3133327">
        <id>O82277</id>
    </interactant>
    <interactant intactId="EBI-4459694">
        <id>Q6X7J9</id>
        <label>WOX4</label>
    </interactant>
    <organismsDiffer>false</organismsDiffer>
    <experiments>3</experiments>
</comment>
<comment type="interaction">
    <interactant intactId="EBI-3133327">
        <id>O82277</id>
    </interactant>
    <interactant intactId="EBI-1113627">
        <id>O22152</id>
        <label>YAB1</label>
    </interactant>
    <organismsDiffer>false</organismsDiffer>
    <experiments>3</experiments>
</comment>
<comment type="subcellular location">
    <subcellularLocation>
        <location evidence="1 3">Nucleus</location>
    </subcellularLocation>
</comment>
<comment type="tissue specificity">
    <text evidence="3 4">Mostly detected in lateral organs, such as leaves and flowers. Expressed in cotyledons, particularly in the vascular region, in leaves, roots, stems, buds, flowers and immature siliques.</text>
</comment>
<comment type="developmental stage">
    <text evidence="4 5">First observed in the distal and middle regions of cotyledons of heart-shaped embryos. Later localized in bending cotyledon, and mature embryos, but no signals were detected in the presumptive shoot apical meristem (SAM) and the boundary region during embryogenesis. Expressed during ovule development (PubMed:25378179).</text>
</comment>
<evidence type="ECO:0000255" key="1">
    <source>
        <dbReference type="PROSITE-ProRule" id="PRU00701"/>
    </source>
</evidence>
<evidence type="ECO:0000256" key="2">
    <source>
        <dbReference type="SAM" id="MobiDB-lite"/>
    </source>
</evidence>
<evidence type="ECO:0000269" key="3">
    <source>
    </source>
</evidence>
<evidence type="ECO:0000269" key="4">
    <source>
    </source>
</evidence>
<evidence type="ECO:0000269" key="5">
    <source>
    </source>
</evidence>
<evidence type="ECO:0000269" key="6">
    <source>
    </source>
</evidence>
<evidence type="ECO:0007829" key="7">
    <source>
        <dbReference type="PDB" id="7VP2"/>
    </source>
</evidence>
<proteinExistence type="evidence at protein level"/>
<accession>O82277</accession>
<sequence length="361" mass="40379">MGLKGYSVGEGGGEIVEVQGGHIIRATGRKDRHSKVFTSKGPRDRRVRLSAHTAIQFYDVQDRLGYDRPSKAVDWLIKKAKTAIDKLELGETTTTTTRQEPVNTKPESPTLVFQRENNDQTQFVAANLDPEDAMKTFFPATTTTNGGGGTNINFQNYPHQDDNNMVSRTTTPPPNLSQDLGLSLHPFQGNNNTVVVPETNNFTTTHFDTFGRISGWNHHDLTMTSSSSSEHQQQEQEERSNGGFMVNHHPHHHHHQPSMMTLLNSQQQQVFLGGQQQQQQRGTLQSSLFPHSFRSWDHHQTTSDHHHHQNQASSMFASSSQYGSHGMMMMQGLSFPNTTRLLHGEEATQPNSSSSPPNSHL</sequence>
<feature type="chain" id="PRO_0000330784" description="Transcription factor TCP10">
    <location>
        <begin position="1"/>
        <end position="361"/>
    </location>
</feature>
<feature type="domain" description="TCP" evidence="1">
    <location>
        <begin position="29"/>
        <end position="87"/>
    </location>
</feature>
<feature type="region of interest" description="Disordered" evidence="2">
    <location>
        <begin position="220"/>
        <end position="259"/>
    </location>
</feature>
<feature type="region of interest" description="Disordered" evidence="2">
    <location>
        <begin position="295"/>
        <end position="317"/>
    </location>
</feature>
<feature type="compositionally biased region" description="Basic and acidic residues" evidence="2">
    <location>
        <begin position="295"/>
        <end position="304"/>
    </location>
</feature>
<feature type="strand" evidence="7">
    <location>
        <begin position="15"/>
        <end position="18"/>
    </location>
</feature>
<feature type="strand" evidence="7">
    <location>
        <begin position="21"/>
        <end position="24"/>
    </location>
</feature>
<feature type="strand" evidence="7">
    <location>
        <begin position="27"/>
        <end position="29"/>
    </location>
</feature>
<feature type="strand" evidence="7">
    <location>
        <begin position="36"/>
        <end position="38"/>
    </location>
</feature>
<feature type="strand" evidence="7">
    <location>
        <begin position="41"/>
        <end position="43"/>
    </location>
</feature>
<feature type="strand" evidence="7">
    <location>
        <begin position="45"/>
        <end position="48"/>
    </location>
</feature>
<feature type="helix" evidence="7">
    <location>
        <begin position="51"/>
        <end position="64"/>
    </location>
</feature>
<feature type="helix" evidence="7">
    <location>
        <begin position="69"/>
        <end position="79"/>
    </location>
</feature>
<feature type="helix" evidence="7">
    <location>
        <begin position="81"/>
        <end position="85"/>
    </location>
</feature>
<protein>
    <recommendedName>
        <fullName>Transcription factor TCP10</fullName>
    </recommendedName>
</protein>
<dbReference type="EMBL" id="AC005311">
    <property type="protein sequence ID" value="AAC63845.1"/>
    <property type="molecule type" value="Genomic_DNA"/>
</dbReference>
<dbReference type="EMBL" id="CP002685">
    <property type="protein sequence ID" value="AEC08487.1"/>
    <property type="molecule type" value="Genomic_DNA"/>
</dbReference>
<dbReference type="EMBL" id="AY059945">
    <property type="protein sequence ID" value="AAL24427.1"/>
    <property type="molecule type" value="mRNA"/>
</dbReference>
<dbReference type="EMBL" id="BT001194">
    <property type="protein sequence ID" value="AAN65081.1"/>
    <property type="molecule type" value="mRNA"/>
</dbReference>
<dbReference type="PIR" id="B84716">
    <property type="entry name" value="B84716"/>
</dbReference>
<dbReference type="RefSeq" id="NP_565712.1">
    <property type="nucleotide sequence ID" value="NM_128662.2"/>
</dbReference>
<dbReference type="PDB" id="7VP1">
    <property type="method" value="X-ray"/>
    <property type="resolution" value="2.90 A"/>
    <property type="chains" value="A/B=1-87"/>
</dbReference>
<dbReference type="PDB" id="7VP2">
    <property type="method" value="X-ray"/>
    <property type="resolution" value="1.92 A"/>
    <property type="chains" value="A/B=1-87"/>
</dbReference>
<dbReference type="PDB" id="7VP4">
    <property type="method" value="X-ray"/>
    <property type="resolution" value="3.04 A"/>
    <property type="chains" value="A/B/E/F/I/J=1-87"/>
</dbReference>
<dbReference type="PDB" id="7VP5">
    <property type="method" value="X-ray"/>
    <property type="resolution" value="2.99 A"/>
    <property type="chains" value="A/B/E/F/I/J=1-87"/>
</dbReference>
<dbReference type="PDB" id="7VP7">
    <property type="method" value="X-ray"/>
    <property type="resolution" value="2.65 A"/>
    <property type="chains" value="A/B=1-87"/>
</dbReference>
<dbReference type="PDBsum" id="7VP1"/>
<dbReference type="PDBsum" id="7VP2"/>
<dbReference type="PDBsum" id="7VP4"/>
<dbReference type="PDBsum" id="7VP5"/>
<dbReference type="PDBsum" id="7VP7"/>
<dbReference type="SMR" id="O82277"/>
<dbReference type="BioGRID" id="3007">
    <property type="interactions" value="150"/>
</dbReference>
<dbReference type="FunCoup" id="O82277">
    <property type="interactions" value="1"/>
</dbReference>
<dbReference type="IntAct" id="O82277">
    <property type="interactions" value="138"/>
</dbReference>
<dbReference type="STRING" id="3702.O82277"/>
<dbReference type="iPTMnet" id="O82277"/>
<dbReference type="PaxDb" id="3702-AT2G31070.1"/>
<dbReference type="ProteomicsDB" id="234249"/>
<dbReference type="EnsemblPlants" id="AT2G31070.1">
    <property type="protein sequence ID" value="AT2G31070.1"/>
    <property type="gene ID" value="AT2G31070"/>
</dbReference>
<dbReference type="GeneID" id="817659"/>
<dbReference type="Gramene" id="AT2G31070.1">
    <property type="protein sequence ID" value="AT2G31070.1"/>
    <property type="gene ID" value="AT2G31070"/>
</dbReference>
<dbReference type="KEGG" id="ath:AT2G31070"/>
<dbReference type="Araport" id="AT2G31070"/>
<dbReference type="TAIR" id="AT2G31070">
    <property type="gene designation" value="TCP10"/>
</dbReference>
<dbReference type="eggNOG" id="ENOG502QTUM">
    <property type="taxonomic scope" value="Eukaryota"/>
</dbReference>
<dbReference type="HOGENOM" id="CLU_033594_0_0_1"/>
<dbReference type="InParanoid" id="O82277"/>
<dbReference type="OMA" id="WSDIPMA"/>
<dbReference type="PRO" id="PR:O82277"/>
<dbReference type="Proteomes" id="UP000006548">
    <property type="component" value="Chromosome 2"/>
</dbReference>
<dbReference type="ExpressionAtlas" id="O82277">
    <property type="expression patterns" value="baseline and differential"/>
</dbReference>
<dbReference type="GO" id="GO:0005634">
    <property type="term" value="C:nucleus"/>
    <property type="evidence" value="ECO:0007669"/>
    <property type="project" value="UniProtKB-SubCell"/>
</dbReference>
<dbReference type="GO" id="GO:0003677">
    <property type="term" value="F:DNA binding"/>
    <property type="evidence" value="ECO:0007669"/>
    <property type="project" value="UniProtKB-KW"/>
</dbReference>
<dbReference type="GO" id="GO:0003700">
    <property type="term" value="F:DNA-binding transcription factor activity"/>
    <property type="evidence" value="ECO:0000250"/>
    <property type="project" value="TAIR"/>
</dbReference>
<dbReference type="GO" id="GO:0048366">
    <property type="term" value="P:leaf development"/>
    <property type="evidence" value="ECO:0000316"/>
    <property type="project" value="TAIR"/>
</dbReference>
<dbReference type="GO" id="GO:0010150">
    <property type="term" value="P:leaf senescence"/>
    <property type="evidence" value="ECO:0000316"/>
    <property type="project" value="TAIR"/>
</dbReference>
<dbReference type="GO" id="GO:0006355">
    <property type="term" value="P:regulation of DNA-templated transcription"/>
    <property type="evidence" value="ECO:0000304"/>
    <property type="project" value="TAIR"/>
</dbReference>
<dbReference type="InterPro" id="IPR017887">
    <property type="entry name" value="TF_TCP_subgr"/>
</dbReference>
<dbReference type="InterPro" id="IPR005333">
    <property type="entry name" value="Transcription_factor_TCP"/>
</dbReference>
<dbReference type="PANTHER" id="PTHR31072:SF240">
    <property type="entry name" value="TRANSCRIPTION FACTOR TCP10"/>
    <property type="match status" value="1"/>
</dbReference>
<dbReference type="PANTHER" id="PTHR31072">
    <property type="entry name" value="TRANSCRIPTION FACTOR TCP4-RELATED"/>
    <property type="match status" value="1"/>
</dbReference>
<dbReference type="Pfam" id="PF03634">
    <property type="entry name" value="TCP"/>
    <property type="match status" value="1"/>
</dbReference>
<dbReference type="PROSITE" id="PS51369">
    <property type="entry name" value="TCP"/>
    <property type="match status" value="1"/>
</dbReference>
<reference key="1">
    <citation type="journal article" date="1999" name="Nature">
        <title>Sequence and analysis of chromosome 2 of the plant Arabidopsis thaliana.</title>
        <authorList>
            <person name="Lin X."/>
            <person name="Kaul S."/>
            <person name="Rounsley S.D."/>
            <person name="Shea T.P."/>
            <person name="Benito M.-I."/>
            <person name="Town C.D."/>
            <person name="Fujii C.Y."/>
            <person name="Mason T.M."/>
            <person name="Bowman C.L."/>
            <person name="Barnstead M.E."/>
            <person name="Feldblyum T.V."/>
            <person name="Buell C.R."/>
            <person name="Ketchum K.A."/>
            <person name="Lee J.J."/>
            <person name="Ronning C.M."/>
            <person name="Koo H.L."/>
            <person name="Moffat K.S."/>
            <person name="Cronin L.A."/>
            <person name="Shen M."/>
            <person name="Pai G."/>
            <person name="Van Aken S."/>
            <person name="Umayam L."/>
            <person name="Tallon L.J."/>
            <person name="Gill J.E."/>
            <person name="Adams M.D."/>
            <person name="Carrera A.J."/>
            <person name="Creasy T.H."/>
            <person name="Goodman H.M."/>
            <person name="Somerville C.R."/>
            <person name="Copenhaver G.P."/>
            <person name="Preuss D."/>
            <person name="Nierman W.C."/>
            <person name="White O."/>
            <person name="Eisen J.A."/>
            <person name="Salzberg S.L."/>
            <person name="Fraser C.M."/>
            <person name="Venter J.C."/>
        </authorList>
    </citation>
    <scope>NUCLEOTIDE SEQUENCE [LARGE SCALE GENOMIC DNA]</scope>
    <source>
        <strain>cv. Columbia</strain>
    </source>
</reference>
<reference key="2">
    <citation type="journal article" date="2017" name="Plant J.">
        <title>Araport11: a complete reannotation of the Arabidopsis thaliana reference genome.</title>
        <authorList>
            <person name="Cheng C.Y."/>
            <person name="Krishnakumar V."/>
            <person name="Chan A.P."/>
            <person name="Thibaud-Nissen F."/>
            <person name="Schobel S."/>
            <person name="Town C.D."/>
        </authorList>
    </citation>
    <scope>GENOME REANNOTATION</scope>
    <source>
        <strain>cv. Columbia</strain>
    </source>
</reference>
<reference key="3">
    <citation type="journal article" date="2003" name="Science">
        <title>Empirical analysis of transcriptional activity in the Arabidopsis genome.</title>
        <authorList>
            <person name="Yamada K."/>
            <person name="Lim J."/>
            <person name="Dale J.M."/>
            <person name="Chen H."/>
            <person name="Shinn P."/>
            <person name="Palm C.J."/>
            <person name="Southwick A.M."/>
            <person name="Wu H.C."/>
            <person name="Kim C.J."/>
            <person name="Nguyen M."/>
            <person name="Pham P.K."/>
            <person name="Cheuk R.F."/>
            <person name="Karlin-Newmann G."/>
            <person name="Liu S.X."/>
            <person name="Lam B."/>
            <person name="Sakano H."/>
            <person name="Wu T."/>
            <person name="Yu G."/>
            <person name="Miranda M."/>
            <person name="Quach H.L."/>
            <person name="Tripp M."/>
            <person name="Chang C.H."/>
            <person name="Lee J.M."/>
            <person name="Toriumi M.J."/>
            <person name="Chan M.M."/>
            <person name="Tang C.C."/>
            <person name="Onodera C.S."/>
            <person name="Deng J.M."/>
            <person name="Akiyama K."/>
            <person name="Ansari Y."/>
            <person name="Arakawa T."/>
            <person name="Banh J."/>
            <person name="Banno F."/>
            <person name="Bowser L."/>
            <person name="Brooks S.Y."/>
            <person name="Carninci P."/>
            <person name="Chao Q."/>
            <person name="Choy N."/>
            <person name="Enju A."/>
            <person name="Goldsmith A.D."/>
            <person name="Gurjal M."/>
            <person name="Hansen N.F."/>
            <person name="Hayashizaki Y."/>
            <person name="Johnson-Hopson C."/>
            <person name="Hsuan V.W."/>
            <person name="Iida K."/>
            <person name="Karnes M."/>
            <person name="Khan S."/>
            <person name="Koesema E."/>
            <person name="Ishida J."/>
            <person name="Jiang P.X."/>
            <person name="Jones T."/>
            <person name="Kawai J."/>
            <person name="Kamiya A."/>
            <person name="Meyers C."/>
            <person name="Nakajima M."/>
            <person name="Narusaka M."/>
            <person name="Seki M."/>
            <person name="Sakurai T."/>
            <person name="Satou M."/>
            <person name="Tamse R."/>
            <person name="Vaysberg M."/>
            <person name="Wallender E.K."/>
            <person name="Wong C."/>
            <person name="Yamamura Y."/>
            <person name="Yuan S."/>
            <person name="Shinozaki K."/>
            <person name="Davis R.W."/>
            <person name="Theologis A."/>
            <person name="Ecker J.R."/>
        </authorList>
    </citation>
    <scope>NUCLEOTIDE SEQUENCE [LARGE SCALE MRNA]</scope>
    <source>
        <strain>cv. Columbia</strain>
    </source>
</reference>
<reference key="4">
    <citation type="journal article" date="2001" name="Plant Cell Physiol.">
        <title>Two types of putative nuclear factors that physically interact with histidine-containing phosphotransfer (Hpt) domains, signaling mediators in His-to-Asp phosphorelay, in Arabidopsis thaliana.</title>
        <authorList>
            <person name="Suzuki T."/>
            <person name="Sakurai K."/>
            <person name="Ueguchi C."/>
            <person name="Mizuno T."/>
        </authorList>
    </citation>
    <scope>SUBCELLULAR LOCATION</scope>
    <scope>TISSUE SPECIFICITY</scope>
    <scope>INTERACTION WITH AHP1; AHP2 AND AHP3</scope>
</reference>
<reference key="5">
    <citation type="journal article" date="2007" name="Plant Cell">
        <title>Arabidopsis BRANCHED1 acts as an integrator of branching signals within axillary buds.</title>
        <authorList>
            <person name="Aguilar-Martinez J.A."/>
            <person name="Poza-Carrion C."/>
            <person name="Cubas P."/>
        </authorList>
    </citation>
    <scope>GENE FAMILY</scope>
    <scope>NOMENCLATURE</scope>
</reference>
<reference key="6">
    <citation type="journal article" date="2007" name="Plant Cell">
        <title>TCP transcription factors control the morphology of shoot lateral organs via negative regulation of the expression of boundary-specific genes in Arabidopsis.</title>
        <authorList>
            <person name="Koyama T."/>
            <person name="Furutani M."/>
            <person name="Tasaka M."/>
            <person name="Ohme-Takagi M."/>
        </authorList>
    </citation>
    <scope>FUNCTION</scope>
    <scope>DEVELOPMENTAL STAGE</scope>
    <scope>TISSUE SPECIFICITY</scope>
</reference>
<reference key="7">
    <citation type="journal article" date="2014" name="J. Genet. Genomics">
        <title>SPOROCYTELESS is a novel embryophyte-specific transcription repressor that interacts with TPL and TCP proteins in Arabidopsis.</title>
        <authorList>
            <person name="Chen G.H."/>
            <person name="Sun J.Y."/>
            <person name="Liu M."/>
            <person name="Liu J."/>
            <person name="Yang W.C."/>
        </authorList>
    </citation>
    <scope>INTERACTION WITH SPL</scope>
</reference>
<reference key="8">
    <citation type="journal article" date="2015" name="Cell Res.">
        <title>The molecular mechanism of sporocyteless/nozzle in controlling Arabidopsis ovule development.</title>
        <authorList>
            <person name="Wei B."/>
            <person name="Zhang J."/>
            <person name="Pang C."/>
            <person name="Yu H."/>
            <person name="Guo D."/>
            <person name="Jiang H."/>
            <person name="Ding M."/>
            <person name="Chen Z."/>
            <person name="Tao Q."/>
            <person name="Gu H."/>
            <person name="Qu L.J."/>
            <person name="Qin G."/>
        </authorList>
    </citation>
    <scope>FUNCTION</scope>
    <scope>INTERACTION WITH SPL</scope>
    <scope>DEVELOPMENTAL STAGE</scope>
</reference>
<keyword id="KW-0002">3D-structure</keyword>
<keyword id="KW-0217">Developmental protein</keyword>
<keyword id="KW-0238">DNA-binding</keyword>
<keyword id="KW-0539">Nucleus</keyword>
<keyword id="KW-1185">Reference proteome</keyword>
<keyword id="KW-0804">Transcription</keyword>
<keyword id="KW-0805">Transcription regulation</keyword>
<organism>
    <name type="scientific">Arabidopsis thaliana</name>
    <name type="common">Mouse-ear cress</name>
    <dbReference type="NCBI Taxonomy" id="3702"/>
    <lineage>
        <taxon>Eukaryota</taxon>
        <taxon>Viridiplantae</taxon>
        <taxon>Streptophyta</taxon>
        <taxon>Embryophyta</taxon>
        <taxon>Tracheophyta</taxon>
        <taxon>Spermatophyta</taxon>
        <taxon>Magnoliopsida</taxon>
        <taxon>eudicotyledons</taxon>
        <taxon>Gunneridae</taxon>
        <taxon>Pentapetalae</taxon>
        <taxon>rosids</taxon>
        <taxon>malvids</taxon>
        <taxon>Brassicales</taxon>
        <taxon>Brassicaceae</taxon>
        <taxon>Camelineae</taxon>
        <taxon>Arabidopsis</taxon>
    </lineage>
</organism>
<name>TCP10_ARATH</name>
<gene>
    <name type="primary">TCP10</name>
    <name type="ordered locus">At2g31070</name>
    <name type="ORF">T16B12.12</name>
</gene>